<sequence>MPKLKTNRGAVKRFKVTGSGKIKRAASNHNHILTKKSQKRKRRLRKIHEVAPSDMRAVSEMLRD</sequence>
<evidence type="ECO:0000255" key="1">
    <source>
        <dbReference type="HAMAP-Rule" id="MF_00514"/>
    </source>
</evidence>
<evidence type="ECO:0000305" key="2"/>
<protein>
    <recommendedName>
        <fullName evidence="1">Large ribosomal subunit protein bL35</fullName>
    </recommendedName>
    <alternativeName>
        <fullName evidence="2">50S ribosomal protein L35</fullName>
    </alternativeName>
</protein>
<proteinExistence type="inferred from homology"/>
<keyword id="KW-1185">Reference proteome</keyword>
<keyword id="KW-0687">Ribonucleoprotein</keyword>
<keyword id="KW-0689">Ribosomal protein</keyword>
<name>RL35_COXBU</name>
<gene>
    <name evidence="1" type="primary">rpmI</name>
    <name type="ordered locus">CBU_1324</name>
</gene>
<comment type="similarity">
    <text evidence="1">Belongs to the bacterial ribosomal protein bL35 family.</text>
</comment>
<organism>
    <name type="scientific">Coxiella burnetii (strain RSA 493 / Nine Mile phase I)</name>
    <dbReference type="NCBI Taxonomy" id="227377"/>
    <lineage>
        <taxon>Bacteria</taxon>
        <taxon>Pseudomonadati</taxon>
        <taxon>Pseudomonadota</taxon>
        <taxon>Gammaproteobacteria</taxon>
        <taxon>Legionellales</taxon>
        <taxon>Coxiellaceae</taxon>
        <taxon>Coxiella</taxon>
    </lineage>
</organism>
<feature type="chain" id="PRO_0000177356" description="Large ribosomal subunit protein bL35">
    <location>
        <begin position="1"/>
        <end position="64"/>
    </location>
</feature>
<reference key="1">
    <citation type="journal article" date="2003" name="Proc. Natl. Acad. Sci. U.S.A.">
        <title>Complete genome sequence of the Q-fever pathogen, Coxiella burnetii.</title>
        <authorList>
            <person name="Seshadri R."/>
            <person name="Paulsen I.T."/>
            <person name="Eisen J.A."/>
            <person name="Read T.D."/>
            <person name="Nelson K.E."/>
            <person name="Nelson W.C."/>
            <person name="Ward N.L."/>
            <person name="Tettelin H."/>
            <person name="Davidsen T.M."/>
            <person name="Beanan M.J."/>
            <person name="DeBoy R.T."/>
            <person name="Daugherty S.C."/>
            <person name="Brinkac L.M."/>
            <person name="Madupu R."/>
            <person name="Dodson R.J."/>
            <person name="Khouri H.M."/>
            <person name="Lee K.H."/>
            <person name="Carty H.A."/>
            <person name="Scanlan D."/>
            <person name="Heinzen R.A."/>
            <person name="Thompson H.A."/>
            <person name="Samuel J.E."/>
            <person name="Fraser C.M."/>
            <person name="Heidelberg J.F."/>
        </authorList>
    </citation>
    <scope>NUCLEOTIDE SEQUENCE [LARGE SCALE GENOMIC DNA]</scope>
    <source>
        <strain>RSA 493 / Nine Mile phase I</strain>
    </source>
</reference>
<accession>Q83C12</accession>
<dbReference type="EMBL" id="AE016828">
    <property type="protein sequence ID" value="AAO90828.1"/>
    <property type="molecule type" value="Genomic_DNA"/>
</dbReference>
<dbReference type="RefSeq" id="NP_820314.1">
    <property type="nucleotide sequence ID" value="NC_002971.4"/>
</dbReference>
<dbReference type="RefSeq" id="WP_005770936.1">
    <property type="nucleotide sequence ID" value="NZ_CDBG01000001.1"/>
</dbReference>
<dbReference type="SMR" id="Q83C12"/>
<dbReference type="STRING" id="227377.CBU_1324"/>
<dbReference type="DNASU" id="1209230"/>
<dbReference type="EnsemblBacteria" id="AAO90828">
    <property type="protein sequence ID" value="AAO90828"/>
    <property type="gene ID" value="CBU_1324"/>
</dbReference>
<dbReference type="GeneID" id="1209230"/>
<dbReference type="KEGG" id="cbu:CBU_1324"/>
<dbReference type="PATRIC" id="fig|227377.7.peg.1315"/>
<dbReference type="eggNOG" id="COG0291">
    <property type="taxonomic scope" value="Bacteria"/>
</dbReference>
<dbReference type="HOGENOM" id="CLU_169643_1_1_6"/>
<dbReference type="OrthoDB" id="47476at2"/>
<dbReference type="Proteomes" id="UP000002671">
    <property type="component" value="Chromosome"/>
</dbReference>
<dbReference type="GO" id="GO:0022625">
    <property type="term" value="C:cytosolic large ribosomal subunit"/>
    <property type="evidence" value="ECO:0000318"/>
    <property type="project" value="GO_Central"/>
</dbReference>
<dbReference type="GO" id="GO:0003735">
    <property type="term" value="F:structural constituent of ribosome"/>
    <property type="evidence" value="ECO:0000318"/>
    <property type="project" value="GO_Central"/>
</dbReference>
<dbReference type="GO" id="GO:0006412">
    <property type="term" value="P:translation"/>
    <property type="evidence" value="ECO:0007669"/>
    <property type="project" value="UniProtKB-UniRule"/>
</dbReference>
<dbReference type="FunFam" id="4.10.410.60:FF:000001">
    <property type="entry name" value="50S ribosomal protein L35"/>
    <property type="match status" value="1"/>
</dbReference>
<dbReference type="Gene3D" id="4.10.410.60">
    <property type="match status" value="1"/>
</dbReference>
<dbReference type="HAMAP" id="MF_00514">
    <property type="entry name" value="Ribosomal_bL35"/>
    <property type="match status" value="1"/>
</dbReference>
<dbReference type="InterPro" id="IPR001706">
    <property type="entry name" value="Ribosomal_bL35"/>
</dbReference>
<dbReference type="InterPro" id="IPR021137">
    <property type="entry name" value="Ribosomal_bL35-like"/>
</dbReference>
<dbReference type="InterPro" id="IPR018265">
    <property type="entry name" value="Ribosomal_bL35_CS"/>
</dbReference>
<dbReference type="InterPro" id="IPR037229">
    <property type="entry name" value="Ribosomal_bL35_sf"/>
</dbReference>
<dbReference type="NCBIfam" id="TIGR00001">
    <property type="entry name" value="rpmI_bact"/>
    <property type="match status" value="1"/>
</dbReference>
<dbReference type="PANTHER" id="PTHR33343">
    <property type="entry name" value="54S RIBOSOMAL PROTEIN BL35M"/>
    <property type="match status" value="1"/>
</dbReference>
<dbReference type="PANTHER" id="PTHR33343:SF1">
    <property type="entry name" value="LARGE RIBOSOMAL SUBUNIT PROTEIN BL35M"/>
    <property type="match status" value="1"/>
</dbReference>
<dbReference type="Pfam" id="PF01632">
    <property type="entry name" value="Ribosomal_L35p"/>
    <property type="match status" value="1"/>
</dbReference>
<dbReference type="PRINTS" id="PR00064">
    <property type="entry name" value="RIBOSOMALL35"/>
</dbReference>
<dbReference type="SUPFAM" id="SSF143034">
    <property type="entry name" value="L35p-like"/>
    <property type="match status" value="1"/>
</dbReference>
<dbReference type="PROSITE" id="PS00936">
    <property type="entry name" value="RIBOSOMAL_L35"/>
    <property type="match status" value="1"/>
</dbReference>